<protein>
    <recommendedName>
        <fullName evidence="1">Large ribosomal subunit protein bL9</fullName>
    </recommendedName>
    <alternativeName>
        <fullName evidence="3">50S ribosomal protein L9</fullName>
    </alternativeName>
</protein>
<feature type="chain" id="PRO_1000014811" description="Large ribosomal subunit protein bL9">
    <location>
        <begin position="1"/>
        <end position="151"/>
    </location>
</feature>
<feature type="strand" evidence="5">
    <location>
        <begin position="4"/>
        <end position="7"/>
    </location>
</feature>
<feature type="turn" evidence="4">
    <location>
        <begin position="10"/>
        <end position="12"/>
    </location>
</feature>
<feature type="strand" evidence="4">
    <location>
        <begin position="18"/>
        <end position="20"/>
    </location>
</feature>
<feature type="helix" evidence="5">
    <location>
        <begin position="23"/>
        <end position="28"/>
    </location>
</feature>
<feature type="helix" evidence="5">
    <location>
        <begin position="30"/>
        <end position="33"/>
    </location>
</feature>
<feature type="strand" evidence="5">
    <location>
        <begin position="35"/>
        <end position="37"/>
    </location>
</feature>
<feature type="helix" evidence="4">
    <location>
        <begin position="42"/>
        <end position="59"/>
    </location>
</feature>
<feature type="helix" evidence="4">
    <location>
        <begin position="63"/>
        <end position="72"/>
    </location>
</feature>
<feature type="strand" evidence="4">
    <location>
        <begin position="73"/>
        <end position="75"/>
    </location>
</feature>
<feature type="strand" evidence="4">
    <location>
        <begin position="78"/>
        <end position="81"/>
    </location>
</feature>
<feature type="turn" evidence="4">
    <location>
        <begin position="86"/>
        <end position="88"/>
    </location>
</feature>
<feature type="strand" evidence="4">
    <location>
        <begin position="90"/>
        <end position="93"/>
    </location>
</feature>
<feature type="helix" evidence="4">
    <location>
        <begin position="97"/>
        <end position="107"/>
    </location>
</feature>
<feature type="helix" evidence="4">
    <location>
        <begin position="114"/>
        <end position="116"/>
    </location>
</feature>
<feature type="turn" evidence="4">
    <location>
        <begin position="120"/>
        <end position="122"/>
    </location>
</feature>
<feature type="strand" evidence="4">
    <location>
        <begin position="125"/>
        <end position="139"/>
    </location>
</feature>
<feature type="strand" evidence="4">
    <location>
        <begin position="141"/>
        <end position="149"/>
    </location>
</feature>
<gene>
    <name evidence="1" type="primary">rplI</name>
    <name type="ordered locus">MSMEG_6894</name>
    <name type="ordered locus">MSMEI_6710</name>
</gene>
<accession>A0R7F6</accession>
<accession>I7GG97</accession>
<dbReference type="EMBL" id="CP000480">
    <property type="protein sequence ID" value="ABK76149.1"/>
    <property type="molecule type" value="Genomic_DNA"/>
</dbReference>
<dbReference type="EMBL" id="CP001663">
    <property type="protein sequence ID" value="AFP43136.1"/>
    <property type="molecule type" value="Genomic_DNA"/>
</dbReference>
<dbReference type="RefSeq" id="WP_003898318.1">
    <property type="nucleotide sequence ID" value="NZ_SIJM01000001.1"/>
</dbReference>
<dbReference type="RefSeq" id="YP_891094.1">
    <property type="nucleotide sequence ID" value="NC_008596.1"/>
</dbReference>
<dbReference type="PDB" id="5O60">
    <property type="method" value="EM"/>
    <property type="resolution" value="3.20 A"/>
    <property type="chains" value="H=1-151"/>
</dbReference>
<dbReference type="PDB" id="5O61">
    <property type="method" value="EM"/>
    <property type="resolution" value="3.31 A"/>
    <property type="chains" value="H=1-151"/>
</dbReference>
<dbReference type="PDB" id="5XYM">
    <property type="method" value="EM"/>
    <property type="resolution" value="3.08 A"/>
    <property type="chains" value="H=1-151"/>
</dbReference>
<dbReference type="PDB" id="5ZEB">
    <property type="method" value="EM"/>
    <property type="resolution" value="3.40 A"/>
    <property type="chains" value="H=1-151"/>
</dbReference>
<dbReference type="PDB" id="5ZEP">
    <property type="method" value="EM"/>
    <property type="resolution" value="3.40 A"/>
    <property type="chains" value="H=1-151"/>
</dbReference>
<dbReference type="PDB" id="5ZET">
    <property type="method" value="EM"/>
    <property type="resolution" value="3.20 A"/>
    <property type="chains" value="H=1-151"/>
</dbReference>
<dbReference type="PDB" id="6DZI">
    <property type="method" value="EM"/>
    <property type="resolution" value="3.46 A"/>
    <property type="chains" value="H=1-151"/>
</dbReference>
<dbReference type="PDB" id="6DZP">
    <property type="method" value="EM"/>
    <property type="resolution" value="3.42 A"/>
    <property type="chains" value="H=1-151"/>
</dbReference>
<dbReference type="PDB" id="7S0S">
    <property type="method" value="EM"/>
    <property type="resolution" value="3.05 A"/>
    <property type="chains" value="I=1-151"/>
</dbReference>
<dbReference type="PDB" id="7XAM">
    <property type="method" value="EM"/>
    <property type="resolution" value="2.80 A"/>
    <property type="chains" value="H=1-151"/>
</dbReference>
<dbReference type="PDB" id="8FR8">
    <property type="method" value="EM"/>
    <property type="resolution" value="2.76 A"/>
    <property type="chains" value="Q=1-151"/>
</dbReference>
<dbReference type="PDB" id="8KAB">
    <property type="method" value="EM"/>
    <property type="resolution" value="3.30 A"/>
    <property type="chains" value="H=1-151"/>
</dbReference>
<dbReference type="PDB" id="8V9J">
    <property type="method" value="EM"/>
    <property type="resolution" value="3.10 A"/>
    <property type="chains" value="H=1-151"/>
</dbReference>
<dbReference type="PDB" id="8V9K">
    <property type="method" value="EM"/>
    <property type="resolution" value="3.10 A"/>
    <property type="chains" value="H=1-151"/>
</dbReference>
<dbReference type="PDB" id="8V9L">
    <property type="method" value="EM"/>
    <property type="resolution" value="3.00 A"/>
    <property type="chains" value="H=1-151"/>
</dbReference>
<dbReference type="PDB" id="8VIO">
    <property type="method" value="EM"/>
    <property type="resolution" value="3.26 A"/>
    <property type="chains" value="H=1-151"/>
</dbReference>
<dbReference type="PDB" id="8VK0">
    <property type="method" value="EM"/>
    <property type="resolution" value="3.14 A"/>
    <property type="chains" value="H=1-151"/>
</dbReference>
<dbReference type="PDB" id="8VK7">
    <property type="method" value="EM"/>
    <property type="resolution" value="3.09 A"/>
    <property type="chains" value="H=1-151"/>
</dbReference>
<dbReference type="PDB" id="8VKI">
    <property type="method" value="EM"/>
    <property type="resolution" value="2.96 A"/>
    <property type="chains" value="H=1-151"/>
</dbReference>
<dbReference type="PDB" id="8VKW">
    <property type="method" value="EM"/>
    <property type="resolution" value="3.44 A"/>
    <property type="chains" value="H=1-151"/>
</dbReference>
<dbReference type="PDB" id="8VR4">
    <property type="method" value="EM"/>
    <property type="resolution" value="2.80 A"/>
    <property type="chains" value="H=1-151"/>
</dbReference>
<dbReference type="PDB" id="8VR8">
    <property type="method" value="EM"/>
    <property type="resolution" value="3.25 A"/>
    <property type="chains" value="H=1-151"/>
</dbReference>
<dbReference type="PDB" id="8VRL">
    <property type="method" value="EM"/>
    <property type="resolution" value="3.33 A"/>
    <property type="chains" value="H=1-151"/>
</dbReference>
<dbReference type="PDB" id="8WHX">
    <property type="method" value="EM"/>
    <property type="resolution" value="2.80 A"/>
    <property type="chains" value="J=1-151"/>
</dbReference>
<dbReference type="PDB" id="8WHY">
    <property type="method" value="EM"/>
    <property type="resolution" value="2.70 A"/>
    <property type="chains" value="J=1-151"/>
</dbReference>
<dbReference type="PDB" id="8WI7">
    <property type="method" value="EM"/>
    <property type="resolution" value="3.50 A"/>
    <property type="chains" value="J=1-151"/>
</dbReference>
<dbReference type="PDB" id="8WI8">
    <property type="method" value="EM"/>
    <property type="resolution" value="2.70 A"/>
    <property type="chains" value="J=1-151"/>
</dbReference>
<dbReference type="PDB" id="8WIB">
    <property type="method" value="EM"/>
    <property type="resolution" value="3.50 A"/>
    <property type="chains" value="J=1-151"/>
</dbReference>
<dbReference type="PDB" id="8WIC">
    <property type="method" value="EM"/>
    <property type="resolution" value="3.50 A"/>
    <property type="chains" value="J=1-151"/>
</dbReference>
<dbReference type="PDB" id="8XZ3">
    <property type="method" value="EM"/>
    <property type="resolution" value="3.60 A"/>
    <property type="chains" value="H=1-151"/>
</dbReference>
<dbReference type="PDBsum" id="5O60"/>
<dbReference type="PDBsum" id="5O61"/>
<dbReference type="PDBsum" id="5XYM"/>
<dbReference type="PDBsum" id="5ZEB"/>
<dbReference type="PDBsum" id="5ZEP"/>
<dbReference type="PDBsum" id="5ZET"/>
<dbReference type="PDBsum" id="6DZI"/>
<dbReference type="PDBsum" id="6DZP"/>
<dbReference type="PDBsum" id="7S0S"/>
<dbReference type="PDBsum" id="7XAM"/>
<dbReference type="PDBsum" id="8FR8"/>
<dbReference type="PDBsum" id="8KAB"/>
<dbReference type="PDBsum" id="8V9J"/>
<dbReference type="PDBsum" id="8V9K"/>
<dbReference type="PDBsum" id="8V9L"/>
<dbReference type="PDBsum" id="8VIO"/>
<dbReference type="PDBsum" id="8VK0"/>
<dbReference type="PDBsum" id="8VK7"/>
<dbReference type="PDBsum" id="8VKI"/>
<dbReference type="PDBsum" id="8VKW"/>
<dbReference type="PDBsum" id="8VR4"/>
<dbReference type="PDBsum" id="8VR8"/>
<dbReference type="PDBsum" id="8VRL"/>
<dbReference type="PDBsum" id="8WHX"/>
<dbReference type="PDBsum" id="8WHY"/>
<dbReference type="PDBsum" id="8WI7"/>
<dbReference type="PDBsum" id="8WI8"/>
<dbReference type="PDBsum" id="8WIB"/>
<dbReference type="PDBsum" id="8WIC"/>
<dbReference type="PDBsum" id="8XZ3"/>
<dbReference type="EMDB" id="EMD-29397"/>
<dbReference type="EMDB" id="EMD-33096"/>
<dbReference type="EMDB" id="EMD-37007"/>
<dbReference type="EMDB" id="EMD-3750"/>
<dbReference type="EMDB" id="EMD-3751"/>
<dbReference type="EMDB" id="EMD-37551"/>
<dbReference type="EMDB" id="EMD-37552"/>
<dbReference type="EMDB" id="EMD-37559"/>
<dbReference type="EMDB" id="EMD-37560"/>
<dbReference type="EMDB" id="EMD-37562"/>
<dbReference type="EMDB" id="EMD-37563"/>
<dbReference type="EMDB" id="EMD-38788"/>
<dbReference type="EMDB" id="EMD-43074"/>
<dbReference type="EMDB" id="EMD-43075"/>
<dbReference type="EMDB" id="EMD-43076"/>
<dbReference type="EMDB" id="EMD-43267"/>
<dbReference type="EMDB" id="EMD-43294"/>
<dbReference type="EMDB" id="EMD-43305"/>
<dbReference type="EMDB" id="EMD-43317"/>
<dbReference type="EMDB" id="EMD-43333"/>
<dbReference type="EMDB" id="EMD-43476"/>
<dbReference type="EMDB" id="EMD-43477"/>
<dbReference type="EMDB" id="EMD-43484"/>
<dbReference type="EMDB" id="EMD-6789"/>
<dbReference type="EMDB" id="EMD-6920"/>
<dbReference type="EMDB" id="EMD-6921"/>
<dbReference type="EMDB" id="EMD-6922"/>
<dbReference type="EMDB" id="EMD-8932"/>
<dbReference type="EMDB" id="EMD-8937"/>
<dbReference type="SMR" id="A0R7F6"/>
<dbReference type="IntAct" id="A0R7F6">
    <property type="interactions" value="2"/>
</dbReference>
<dbReference type="STRING" id="246196.MSMEG_6894"/>
<dbReference type="PaxDb" id="246196-MSMEI_6710"/>
<dbReference type="KEGG" id="msb:LJ00_34065"/>
<dbReference type="KEGG" id="msg:MSMEI_6710"/>
<dbReference type="KEGG" id="msm:MSMEG_6894"/>
<dbReference type="PATRIC" id="fig|246196.19.peg.6715"/>
<dbReference type="eggNOG" id="COG0359">
    <property type="taxonomic scope" value="Bacteria"/>
</dbReference>
<dbReference type="OrthoDB" id="9788336at2"/>
<dbReference type="Proteomes" id="UP000000757">
    <property type="component" value="Chromosome"/>
</dbReference>
<dbReference type="Proteomes" id="UP000006158">
    <property type="component" value="Chromosome"/>
</dbReference>
<dbReference type="GO" id="GO:1990904">
    <property type="term" value="C:ribonucleoprotein complex"/>
    <property type="evidence" value="ECO:0007669"/>
    <property type="project" value="UniProtKB-KW"/>
</dbReference>
<dbReference type="GO" id="GO:0005840">
    <property type="term" value="C:ribosome"/>
    <property type="evidence" value="ECO:0007669"/>
    <property type="project" value="UniProtKB-KW"/>
</dbReference>
<dbReference type="GO" id="GO:0019843">
    <property type="term" value="F:rRNA binding"/>
    <property type="evidence" value="ECO:0007669"/>
    <property type="project" value="UniProtKB-UniRule"/>
</dbReference>
<dbReference type="GO" id="GO:0003735">
    <property type="term" value="F:structural constituent of ribosome"/>
    <property type="evidence" value="ECO:0007669"/>
    <property type="project" value="InterPro"/>
</dbReference>
<dbReference type="GO" id="GO:0006412">
    <property type="term" value="P:translation"/>
    <property type="evidence" value="ECO:0007669"/>
    <property type="project" value="UniProtKB-UniRule"/>
</dbReference>
<dbReference type="FunFam" id="3.40.5.10:FF:000003">
    <property type="entry name" value="50S ribosomal protein L9"/>
    <property type="match status" value="1"/>
</dbReference>
<dbReference type="Gene3D" id="3.10.430.100">
    <property type="entry name" value="Ribosomal protein L9, C-terminal domain"/>
    <property type="match status" value="1"/>
</dbReference>
<dbReference type="Gene3D" id="3.40.5.10">
    <property type="entry name" value="Ribosomal protein L9, N-terminal domain"/>
    <property type="match status" value="1"/>
</dbReference>
<dbReference type="HAMAP" id="MF_00503">
    <property type="entry name" value="Ribosomal_bL9"/>
    <property type="match status" value="1"/>
</dbReference>
<dbReference type="InterPro" id="IPR000244">
    <property type="entry name" value="Ribosomal_bL9"/>
</dbReference>
<dbReference type="InterPro" id="IPR009027">
    <property type="entry name" value="Ribosomal_bL9/RNase_H1_N"/>
</dbReference>
<dbReference type="InterPro" id="IPR020594">
    <property type="entry name" value="Ribosomal_bL9_bac/chp"/>
</dbReference>
<dbReference type="InterPro" id="IPR020069">
    <property type="entry name" value="Ribosomal_bL9_C"/>
</dbReference>
<dbReference type="InterPro" id="IPR036791">
    <property type="entry name" value="Ribosomal_bL9_C_sf"/>
</dbReference>
<dbReference type="InterPro" id="IPR020070">
    <property type="entry name" value="Ribosomal_bL9_N"/>
</dbReference>
<dbReference type="InterPro" id="IPR036935">
    <property type="entry name" value="Ribosomal_bL9_N_sf"/>
</dbReference>
<dbReference type="NCBIfam" id="TIGR00158">
    <property type="entry name" value="L9"/>
    <property type="match status" value="1"/>
</dbReference>
<dbReference type="PANTHER" id="PTHR21368">
    <property type="entry name" value="50S RIBOSOMAL PROTEIN L9"/>
    <property type="match status" value="1"/>
</dbReference>
<dbReference type="Pfam" id="PF03948">
    <property type="entry name" value="Ribosomal_L9_C"/>
    <property type="match status" value="1"/>
</dbReference>
<dbReference type="Pfam" id="PF01281">
    <property type="entry name" value="Ribosomal_L9_N"/>
    <property type="match status" value="1"/>
</dbReference>
<dbReference type="SUPFAM" id="SSF55658">
    <property type="entry name" value="L9 N-domain-like"/>
    <property type="match status" value="1"/>
</dbReference>
<dbReference type="SUPFAM" id="SSF55653">
    <property type="entry name" value="Ribosomal protein L9 C-domain"/>
    <property type="match status" value="1"/>
</dbReference>
<dbReference type="PROSITE" id="PS00651">
    <property type="entry name" value="RIBOSOMAL_L9"/>
    <property type="match status" value="1"/>
</dbReference>
<comment type="function">
    <text evidence="1">Binds to the 23S rRNA.</text>
</comment>
<comment type="miscellaneous">
    <text evidence="2">Binds 2-aminothiazole antibiotics, which are antitubercular agents (PubMed:30416491).</text>
</comment>
<comment type="similarity">
    <text evidence="1">Belongs to the bacterial ribosomal protein bL9 family.</text>
</comment>
<proteinExistence type="evidence at protein level"/>
<keyword id="KW-0002">3D-structure</keyword>
<keyword id="KW-1185">Reference proteome</keyword>
<keyword id="KW-0687">Ribonucleoprotein</keyword>
<keyword id="KW-0689">Ribosomal protein</keyword>
<keyword id="KW-0694">RNA-binding</keyword>
<keyword id="KW-0699">rRNA-binding</keyword>
<evidence type="ECO:0000255" key="1">
    <source>
        <dbReference type="HAMAP-Rule" id="MF_00503"/>
    </source>
</evidence>
<evidence type="ECO:0000269" key="2">
    <source>
    </source>
</evidence>
<evidence type="ECO:0000305" key="3"/>
<evidence type="ECO:0007829" key="4">
    <source>
        <dbReference type="PDB" id="5O60"/>
    </source>
</evidence>
<evidence type="ECO:0007829" key="5">
    <source>
        <dbReference type="PDB" id="5XYM"/>
    </source>
</evidence>
<name>RL9_MYCS2</name>
<organism>
    <name type="scientific">Mycolicibacterium smegmatis (strain ATCC 700084 / mc(2)155)</name>
    <name type="common">Mycobacterium smegmatis</name>
    <dbReference type="NCBI Taxonomy" id="246196"/>
    <lineage>
        <taxon>Bacteria</taxon>
        <taxon>Bacillati</taxon>
        <taxon>Actinomycetota</taxon>
        <taxon>Actinomycetes</taxon>
        <taxon>Mycobacteriales</taxon>
        <taxon>Mycobacteriaceae</taxon>
        <taxon>Mycolicibacterium</taxon>
    </lineage>
</organism>
<sequence>MKLILTAEVEHLGAAGDTVEVKDGYGRNYLLPRGLAIVASRGAERQAEEIRRARESKVIRDIEHANELKTALEGLGDVTLSVNAAGDTGKLFGSVTAADVVNAIKKAGGPNLDKRTVQLAKAHIKSVGTHPVTVKLHTGVEAKVSLNVVAQ</sequence>
<reference key="1">
    <citation type="submission" date="2006-10" db="EMBL/GenBank/DDBJ databases">
        <authorList>
            <person name="Fleischmann R.D."/>
            <person name="Dodson R.J."/>
            <person name="Haft D.H."/>
            <person name="Merkel J.S."/>
            <person name="Nelson W.C."/>
            <person name="Fraser C.M."/>
        </authorList>
    </citation>
    <scope>NUCLEOTIDE SEQUENCE [LARGE SCALE GENOMIC DNA]</scope>
    <source>
        <strain>ATCC 700084 / mc(2)155</strain>
    </source>
</reference>
<reference key="2">
    <citation type="journal article" date="2007" name="Genome Biol.">
        <title>Interrupted coding sequences in Mycobacterium smegmatis: authentic mutations or sequencing errors?</title>
        <authorList>
            <person name="Deshayes C."/>
            <person name="Perrodou E."/>
            <person name="Gallien S."/>
            <person name="Euphrasie D."/>
            <person name="Schaeffer C."/>
            <person name="Van-Dorsselaer A."/>
            <person name="Poch O."/>
            <person name="Lecompte O."/>
            <person name="Reyrat J.-M."/>
        </authorList>
    </citation>
    <scope>NUCLEOTIDE SEQUENCE [LARGE SCALE GENOMIC DNA]</scope>
    <source>
        <strain>ATCC 700084 / mc(2)155</strain>
    </source>
</reference>
<reference key="3">
    <citation type="journal article" date="2009" name="Genome Res.">
        <title>Ortho-proteogenomics: multiple proteomes investigation through orthology and a new MS-based protocol.</title>
        <authorList>
            <person name="Gallien S."/>
            <person name="Perrodou E."/>
            <person name="Carapito C."/>
            <person name="Deshayes C."/>
            <person name="Reyrat J.-M."/>
            <person name="Van Dorsselaer A."/>
            <person name="Poch O."/>
            <person name="Schaeffer C."/>
            <person name="Lecompte O."/>
        </authorList>
    </citation>
    <scope>NUCLEOTIDE SEQUENCE [LARGE SCALE GENOMIC DNA]</scope>
    <scope>IDENTIFICATION BY MASS SPECTROMETRY [LARGE SCALE ANALYSIS]</scope>
    <source>
        <strain>ATCC 700084 / mc(2)155</strain>
    </source>
</reference>
<reference key="4">
    <citation type="journal article" date="2018" name="Front. Microbiol.">
        <title>Identification of Enolase as the Target of 2-Aminothiazoles in Mycobacterium tuberculosis.</title>
        <authorList>
            <person name="Wescott H.H."/>
            <person name="Zuniga E.S."/>
            <person name="Bajpai A."/>
            <person name="Trujillo C."/>
            <person name="Ehrt S."/>
            <person name="Schnappinger D."/>
            <person name="Roberts D.M."/>
            <person name="Parish T."/>
        </authorList>
    </citation>
    <scope>IDENTIFICATION BY MASS SPECTROMETRY</scope>
    <scope>INTERACTION WITH 2-AMINOTHIAZOLE ANTIBIOTICS</scope>
    <source>
        <strain>ATCC 700084 / mc(2)155</strain>
    </source>
</reference>